<reference key="1">
    <citation type="journal article" date="2007" name="Proc. Natl. Acad. Sci. U.S.A.">
        <title>The genome of Syntrophus aciditrophicus: life at the thermodynamic limit of microbial growth.</title>
        <authorList>
            <person name="McInerney M.J."/>
            <person name="Rohlin L."/>
            <person name="Mouttaki H."/>
            <person name="Kim U."/>
            <person name="Krupp R.S."/>
            <person name="Rios-Hernandez L."/>
            <person name="Sieber J."/>
            <person name="Struchtemeyer C.G."/>
            <person name="Bhattacharyya A."/>
            <person name="Campbell J.W."/>
            <person name="Gunsalus R.P."/>
        </authorList>
    </citation>
    <scope>NUCLEOTIDE SEQUENCE [LARGE SCALE GENOMIC DNA]</scope>
    <source>
        <strain>SB</strain>
    </source>
</reference>
<protein>
    <recommendedName>
        <fullName evidence="1">Ribosome maturation factor RimM</fullName>
    </recommendedName>
</protein>
<proteinExistence type="inferred from homology"/>
<gene>
    <name evidence="1" type="primary">rimM</name>
    <name type="ordered locus">SYNAS_23270</name>
    <name type="ORF">SYN_00767</name>
</gene>
<name>RIMM_SYNAS</name>
<accession>Q2LVU6</accession>
<evidence type="ECO:0000255" key="1">
    <source>
        <dbReference type="HAMAP-Rule" id="MF_00014"/>
    </source>
</evidence>
<organism>
    <name type="scientific">Syntrophus aciditrophicus (strain SB)</name>
    <dbReference type="NCBI Taxonomy" id="56780"/>
    <lineage>
        <taxon>Bacteria</taxon>
        <taxon>Pseudomonadati</taxon>
        <taxon>Thermodesulfobacteriota</taxon>
        <taxon>Syntrophia</taxon>
        <taxon>Syntrophales</taxon>
        <taxon>Syntrophaceae</taxon>
        <taxon>Syntrophus</taxon>
    </lineage>
</organism>
<keyword id="KW-0143">Chaperone</keyword>
<keyword id="KW-0963">Cytoplasm</keyword>
<keyword id="KW-1185">Reference proteome</keyword>
<keyword id="KW-0690">Ribosome biogenesis</keyword>
<keyword id="KW-0698">rRNA processing</keyword>
<dbReference type="EMBL" id="CP000252">
    <property type="protein sequence ID" value="ABC78206.1"/>
    <property type="molecule type" value="Genomic_DNA"/>
</dbReference>
<dbReference type="RefSeq" id="WP_011418225.1">
    <property type="nucleotide sequence ID" value="NC_007759.1"/>
</dbReference>
<dbReference type="SMR" id="Q2LVU6"/>
<dbReference type="FunCoup" id="Q2LVU6">
    <property type="interactions" value="390"/>
</dbReference>
<dbReference type="STRING" id="56780.SYN_00767"/>
<dbReference type="KEGG" id="sat:SYN_00767"/>
<dbReference type="eggNOG" id="COG0806">
    <property type="taxonomic scope" value="Bacteria"/>
</dbReference>
<dbReference type="HOGENOM" id="CLU_077636_1_0_7"/>
<dbReference type="InParanoid" id="Q2LVU6"/>
<dbReference type="OrthoDB" id="9783509at2"/>
<dbReference type="Proteomes" id="UP000001933">
    <property type="component" value="Chromosome"/>
</dbReference>
<dbReference type="GO" id="GO:0005737">
    <property type="term" value="C:cytoplasm"/>
    <property type="evidence" value="ECO:0007669"/>
    <property type="project" value="UniProtKB-SubCell"/>
</dbReference>
<dbReference type="GO" id="GO:0005840">
    <property type="term" value="C:ribosome"/>
    <property type="evidence" value="ECO:0007669"/>
    <property type="project" value="InterPro"/>
</dbReference>
<dbReference type="GO" id="GO:0043022">
    <property type="term" value="F:ribosome binding"/>
    <property type="evidence" value="ECO:0007669"/>
    <property type="project" value="InterPro"/>
</dbReference>
<dbReference type="GO" id="GO:0042274">
    <property type="term" value="P:ribosomal small subunit biogenesis"/>
    <property type="evidence" value="ECO:0007669"/>
    <property type="project" value="UniProtKB-UniRule"/>
</dbReference>
<dbReference type="GO" id="GO:0006364">
    <property type="term" value="P:rRNA processing"/>
    <property type="evidence" value="ECO:0007669"/>
    <property type="project" value="UniProtKB-UniRule"/>
</dbReference>
<dbReference type="Gene3D" id="2.30.30.240">
    <property type="entry name" value="PRC-barrel domain"/>
    <property type="match status" value="1"/>
</dbReference>
<dbReference type="Gene3D" id="2.40.30.60">
    <property type="entry name" value="RimM"/>
    <property type="match status" value="1"/>
</dbReference>
<dbReference type="HAMAP" id="MF_00014">
    <property type="entry name" value="Ribosome_mat_RimM"/>
    <property type="match status" value="1"/>
</dbReference>
<dbReference type="InterPro" id="IPR011033">
    <property type="entry name" value="PRC_barrel-like_sf"/>
</dbReference>
<dbReference type="InterPro" id="IPR056792">
    <property type="entry name" value="PRC_RimM"/>
</dbReference>
<dbReference type="InterPro" id="IPR011961">
    <property type="entry name" value="RimM"/>
</dbReference>
<dbReference type="InterPro" id="IPR002676">
    <property type="entry name" value="RimM_N"/>
</dbReference>
<dbReference type="InterPro" id="IPR036976">
    <property type="entry name" value="RimM_N_sf"/>
</dbReference>
<dbReference type="InterPro" id="IPR009000">
    <property type="entry name" value="Transl_B-barrel_sf"/>
</dbReference>
<dbReference type="NCBIfam" id="TIGR02273">
    <property type="entry name" value="16S_RimM"/>
    <property type="match status" value="1"/>
</dbReference>
<dbReference type="PANTHER" id="PTHR33692">
    <property type="entry name" value="RIBOSOME MATURATION FACTOR RIMM"/>
    <property type="match status" value="1"/>
</dbReference>
<dbReference type="PANTHER" id="PTHR33692:SF1">
    <property type="entry name" value="RIBOSOME MATURATION FACTOR RIMM"/>
    <property type="match status" value="1"/>
</dbReference>
<dbReference type="Pfam" id="PF24986">
    <property type="entry name" value="PRC_RimM"/>
    <property type="match status" value="1"/>
</dbReference>
<dbReference type="Pfam" id="PF01782">
    <property type="entry name" value="RimM"/>
    <property type="match status" value="1"/>
</dbReference>
<dbReference type="SUPFAM" id="SSF50346">
    <property type="entry name" value="PRC-barrel domain"/>
    <property type="match status" value="1"/>
</dbReference>
<dbReference type="SUPFAM" id="SSF50447">
    <property type="entry name" value="Translation proteins"/>
    <property type="match status" value="1"/>
</dbReference>
<sequence length="166" mass="18597">MKFFEIGEIVKSHGLKGRMKAKSYVENGEDLSSVHEAMIVKGKEEPRGYKVRKIVLHKTYFFLELETIDTVESADSLVGSTVLIPEDDRAALSGDEYYWRDLMGLQVVTEEGRFLGRIESIFPTGSNDVYVCAGGSREILLPAISDVILKIDLDKKEMVVRLLPGL</sequence>
<comment type="function">
    <text evidence="1">An accessory protein needed during the final step in the assembly of 30S ribosomal subunit, possibly for assembly of the head region. Essential for efficient processing of 16S rRNA. May be needed both before and after RbfA during the maturation of 16S rRNA. It has affinity for free ribosomal 30S subunits but not for 70S ribosomes.</text>
</comment>
<comment type="subunit">
    <text evidence="1">Binds ribosomal protein uS19.</text>
</comment>
<comment type="subcellular location">
    <subcellularLocation>
        <location evidence="1">Cytoplasm</location>
    </subcellularLocation>
</comment>
<comment type="domain">
    <text evidence="1">The PRC barrel domain binds ribosomal protein uS19.</text>
</comment>
<comment type="similarity">
    <text evidence="1">Belongs to the RimM family.</text>
</comment>
<feature type="chain" id="PRO_0000244181" description="Ribosome maturation factor RimM">
    <location>
        <begin position="1"/>
        <end position="166"/>
    </location>
</feature>
<feature type="domain" description="PRC barrel" evidence="1">
    <location>
        <begin position="94"/>
        <end position="166"/>
    </location>
</feature>